<accession>Q9YF89</accession>
<keyword id="KW-1185">Reference proteome</keyword>
<keyword id="KW-0687">Ribonucleoprotein</keyword>
<keyword id="KW-0689">Ribosomal protein</keyword>
<keyword id="KW-0694">RNA-binding</keyword>
<keyword id="KW-0699">rRNA-binding</keyword>
<comment type="function">
    <text evidence="1">One of the primary rRNA binding proteins, it binds directly to 16S rRNA central domain where it helps coordinate assembly of the platform of the 30S subunit.</text>
</comment>
<comment type="subunit">
    <text evidence="1">Part of the 30S ribosomal subunit.</text>
</comment>
<comment type="similarity">
    <text evidence="1">Belongs to the universal ribosomal protein uS8 family.</text>
</comment>
<evidence type="ECO:0000255" key="1">
    <source>
        <dbReference type="HAMAP-Rule" id="MF_01302"/>
    </source>
</evidence>
<evidence type="ECO:0000305" key="2"/>
<gene>
    <name evidence="1" type="primary">rps8</name>
    <name type="ordered locus">APE_0352.1</name>
</gene>
<organism>
    <name type="scientific">Aeropyrum pernix (strain ATCC 700893 / DSM 11879 / JCM 9820 / NBRC 100138 / K1)</name>
    <dbReference type="NCBI Taxonomy" id="272557"/>
    <lineage>
        <taxon>Archaea</taxon>
        <taxon>Thermoproteota</taxon>
        <taxon>Thermoprotei</taxon>
        <taxon>Desulfurococcales</taxon>
        <taxon>Desulfurococcaceae</taxon>
        <taxon>Aeropyrum</taxon>
    </lineage>
</organism>
<name>RS8_AERPE</name>
<proteinExistence type="inferred from homology"/>
<dbReference type="EMBL" id="BA000002">
    <property type="protein sequence ID" value="BAA79307.2"/>
    <property type="molecule type" value="Genomic_DNA"/>
</dbReference>
<dbReference type="PIR" id="G72726">
    <property type="entry name" value="G72726"/>
</dbReference>
<dbReference type="RefSeq" id="WP_010865685.1">
    <property type="nucleotide sequence ID" value="NC_000854.2"/>
</dbReference>
<dbReference type="SMR" id="Q9YF89"/>
<dbReference type="STRING" id="272557.APE_0352.1"/>
<dbReference type="EnsemblBacteria" id="BAA79307">
    <property type="protein sequence ID" value="BAA79307"/>
    <property type="gene ID" value="APE_0352.1"/>
</dbReference>
<dbReference type="GeneID" id="1444569"/>
<dbReference type="KEGG" id="ape:APE_0352.1"/>
<dbReference type="PATRIC" id="fig|272557.25.peg.271"/>
<dbReference type="eggNOG" id="arCOG04091">
    <property type="taxonomic scope" value="Archaea"/>
</dbReference>
<dbReference type="Proteomes" id="UP000002518">
    <property type="component" value="Chromosome"/>
</dbReference>
<dbReference type="GO" id="GO:1990904">
    <property type="term" value="C:ribonucleoprotein complex"/>
    <property type="evidence" value="ECO:0007669"/>
    <property type="project" value="UniProtKB-KW"/>
</dbReference>
<dbReference type="GO" id="GO:0005840">
    <property type="term" value="C:ribosome"/>
    <property type="evidence" value="ECO:0007669"/>
    <property type="project" value="UniProtKB-KW"/>
</dbReference>
<dbReference type="GO" id="GO:0019843">
    <property type="term" value="F:rRNA binding"/>
    <property type="evidence" value="ECO:0007669"/>
    <property type="project" value="UniProtKB-UniRule"/>
</dbReference>
<dbReference type="GO" id="GO:0003735">
    <property type="term" value="F:structural constituent of ribosome"/>
    <property type="evidence" value="ECO:0007669"/>
    <property type="project" value="InterPro"/>
</dbReference>
<dbReference type="GO" id="GO:0006412">
    <property type="term" value="P:translation"/>
    <property type="evidence" value="ECO:0007669"/>
    <property type="project" value="UniProtKB-UniRule"/>
</dbReference>
<dbReference type="FunFam" id="3.30.1370.30:FF:000001">
    <property type="entry name" value="40S ribosomal protein S15a"/>
    <property type="match status" value="1"/>
</dbReference>
<dbReference type="Gene3D" id="3.30.1370.30">
    <property type="match status" value="1"/>
</dbReference>
<dbReference type="Gene3D" id="3.30.1490.10">
    <property type="match status" value="1"/>
</dbReference>
<dbReference type="HAMAP" id="MF_01302_A">
    <property type="entry name" value="Ribosomal_uS8_A"/>
    <property type="match status" value="1"/>
</dbReference>
<dbReference type="InterPro" id="IPR000630">
    <property type="entry name" value="Ribosomal_uS8"/>
</dbReference>
<dbReference type="InterPro" id="IPR047863">
    <property type="entry name" value="Ribosomal_uS8_CS"/>
</dbReference>
<dbReference type="InterPro" id="IPR035987">
    <property type="entry name" value="Ribosomal_uS8_sf"/>
</dbReference>
<dbReference type="NCBIfam" id="NF003115">
    <property type="entry name" value="PRK04034.1"/>
    <property type="match status" value="1"/>
</dbReference>
<dbReference type="PANTHER" id="PTHR11758">
    <property type="entry name" value="40S RIBOSOMAL PROTEIN S15A"/>
    <property type="match status" value="1"/>
</dbReference>
<dbReference type="Pfam" id="PF00410">
    <property type="entry name" value="Ribosomal_S8"/>
    <property type="match status" value="1"/>
</dbReference>
<dbReference type="SUPFAM" id="SSF56047">
    <property type="entry name" value="Ribosomal protein S8"/>
    <property type="match status" value="1"/>
</dbReference>
<dbReference type="PROSITE" id="PS00053">
    <property type="entry name" value="RIBOSOMAL_S8"/>
    <property type="match status" value="1"/>
</dbReference>
<reference key="1">
    <citation type="journal article" date="1999" name="DNA Res.">
        <title>Complete genome sequence of an aerobic hyper-thermophilic crenarchaeon, Aeropyrum pernix K1.</title>
        <authorList>
            <person name="Kawarabayasi Y."/>
            <person name="Hino Y."/>
            <person name="Horikawa H."/>
            <person name="Yamazaki S."/>
            <person name="Haikawa Y."/>
            <person name="Jin-no K."/>
            <person name="Takahashi M."/>
            <person name="Sekine M."/>
            <person name="Baba S."/>
            <person name="Ankai A."/>
            <person name="Kosugi H."/>
            <person name="Hosoyama A."/>
            <person name="Fukui S."/>
            <person name="Nagai Y."/>
            <person name="Nishijima K."/>
            <person name="Nakazawa H."/>
            <person name="Takamiya M."/>
            <person name="Masuda S."/>
            <person name="Funahashi T."/>
            <person name="Tanaka T."/>
            <person name="Kudoh Y."/>
            <person name="Yamazaki J."/>
            <person name="Kushida N."/>
            <person name="Oguchi A."/>
            <person name="Aoki K."/>
            <person name="Kubota K."/>
            <person name="Nakamura Y."/>
            <person name="Nomura N."/>
            <person name="Sako Y."/>
            <person name="Kikuchi H."/>
        </authorList>
    </citation>
    <scope>NUCLEOTIDE SEQUENCE [LARGE SCALE GENOMIC DNA]</scope>
    <source>
        <strain>ATCC 700893 / DSM 11879 / JCM 9820 / NBRC 100138 / K1</strain>
    </source>
</reference>
<protein>
    <recommendedName>
        <fullName evidence="1">Small ribosomal subunit protein uS8</fullName>
    </recommendedName>
    <alternativeName>
        <fullName evidence="2">30S ribosomal protein S8</fullName>
    </alternativeName>
</protein>
<sequence>MVMLDTLANAMAAIKNAEMRGKGEAIIMPSSKLIANVLRILEKEGYIGGFEYIDDGRWGKFRVKLLGRINDIGVVKPRTPVSYRELAKMPEHLRKYLASRDVGLLILSTPQGVMTHREALKRKIGGIVIAYVY</sequence>
<feature type="chain" id="PRO_0000126534" description="Small ribosomal subunit protein uS8">
    <location>
        <begin position="1"/>
        <end position="133"/>
    </location>
</feature>